<comment type="function">
    <text evidence="1">Specifically methylates the adenine in position 37 of tRNA(1)(Val) (anticodon cmo5UAC).</text>
</comment>
<comment type="catalytic activity">
    <reaction evidence="1">
        <text>adenosine(37) in tRNA1(Val) + S-adenosyl-L-methionine = N(6)-methyladenosine(37) in tRNA1(Val) + S-adenosyl-L-homocysteine + H(+)</text>
        <dbReference type="Rhea" id="RHEA:43160"/>
        <dbReference type="Rhea" id="RHEA-COMP:10369"/>
        <dbReference type="Rhea" id="RHEA-COMP:10370"/>
        <dbReference type="ChEBI" id="CHEBI:15378"/>
        <dbReference type="ChEBI" id="CHEBI:57856"/>
        <dbReference type="ChEBI" id="CHEBI:59789"/>
        <dbReference type="ChEBI" id="CHEBI:74411"/>
        <dbReference type="ChEBI" id="CHEBI:74449"/>
        <dbReference type="EC" id="2.1.1.223"/>
    </reaction>
</comment>
<comment type="subcellular location">
    <subcellularLocation>
        <location evidence="1">Cytoplasm</location>
    </subcellularLocation>
</comment>
<comment type="similarity">
    <text evidence="1">Belongs to the methyltransferase superfamily. tRNA (adenine-N(6)-)-methyltransferase family.</text>
</comment>
<accession>B1KF36</accession>
<sequence length="243" mass="26935">MAFTFKQFHIDDHGCGMPVSTDGVLLGAWAPLSKAENLLDIGAGSGLLSLMAAQRSEAQITAVELDDTAFHACNKNFIASKWQSRLNLVYASVQEFCNQHTDGNNAQFDHIICNPPYFKGGTQSSNRLRAQARHTDSLTFHALLEVITKLLAATGTASLILPSQSMTPFIEEVEKSELWMNQLTNISDSRFKAPHRHLFTLKHKATKLAEDDTVITNNLCIKEPDASYTPEMIALITGFYLKY</sequence>
<name>TRMN6_SHEWM</name>
<reference key="1">
    <citation type="submission" date="2008-02" db="EMBL/GenBank/DDBJ databases">
        <title>Complete sequence of Shewanella woodyi ATCC 51908.</title>
        <authorList>
            <consortium name="US DOE Joint Genome Institute"/>
            <person name="Copeland A."/>
            <person name="Lucas S."/>
            <person name="Lapidus A."/>
            <person name="Glavina del Rio T."/>
            <person name="Dalin E."/>
            <person name="Tice H."/>
            <person name="Bruce D."/>
            <person name="Goodwin L."/>
            <person name="Pitluck S."/>
            <person name="Sims D."/>
            <person name="Brettin T."/>
            <person name="Detter J.C."/>
            <person name="Han C."/>
            <person name="Kuske C.R."/>
            <person name="Schmutz J."/>
            <person name="Larimer F."/>
            <person name="Land M."/>
            <person name="Hauser L."/>
            <person name="Kyrpides N."/>
            <person name="Lykidis A."/>
            <person name="Zhao J.-S."/>
            <person name="Richardson P."/>
        </authorList>
    </citation>
    <scope>NUCLEOTIDE SEQUENCE [LARGE SCALE GENOMIC DNA]</scope>
    <source>
        <strain>ATCC 51908 / MS32</strain>
    </source>
</reference>
<keyword id="KW-0963">Cytoplasm</keyword>
<keyword id="KW-0489">Methyltransferase</keyword>
<keyword id="KW-1185">Reference proteome</keyword>
<keyword id="KW-0949">S-adenosyl-L-methionine</keyword>
<keyword id="KW-0808">Transferase</keyword>
<keyword id="KW-0819">tRNA processing</keyword>
<gene>
    <name type="ordered locus">Swoo_0893</name>
</gene>
<evidence type="ECO:0000255" key="1">
    <source>
        <dbReference type="HAMAP-Rule" id="MF_01872"/>
    </source>
</evidence>
<dbReference type="EC" id="2.1.1.223" evidence="1"/>
<dbReference type="EMBL" id="CP000961">
    <property type="protein sequence ID" value="ACA85187.1"/>
    <property type="molecule type" value="Genomic_DNA"/>
</dbReference>
<dbReference type="RefSeq" id="WP_012323534.1">
    <property type="nucleotide sequence ID" value="NC_010506.1"/>
</dbReference>
<dbReference type="SMR" id="B1KF36"/>
<dbReference type="STRING" id="392500.Swoo_0893"/>
<dbReference type="KEGG" id="swd:Swoo_0893"/>
<dbReference type="eggNOG" id="COG4123">
    <property type="taxonomic scope" value="Bacteria"/>
</dbReference>
<dbReference type="HOGENOM" id="CLU_061983_0_0_6"/>
<dbReference type="Proteomes" id="UP000002168">
    <property type="component" value="Chromosome"/>
</dbReference>
<dbReference type="GO" id="GO:0005737">
    <property type="term" value="C:cytoplasm"/>
    <property type="evidence" value="ECO:0007669"/>
    <property type="project" value="UniProtKB-SubCell"/>
</dbReference>
<dbReference type="GO" id="GO:0003676">
    <property type="term" value="F:nucleic acid binding"/>
    <property type="evidence" value="ECO:0007669"/>
    <property type="project" value="InterPro"/>
</dbReference>
<dbReference type="GO" id="GO:0000179">
    <property type="term" value="F:rRNA (adenine-N6,N6-)-dimethyltransferase activity"/>
    <property type="evidence" value="ECO:0007669"/>
    <property type="project" value="InterPro"/>
</dbReference>
<dbReference type="GO" id="GO:0016430">
    <property type="term" value="F:tRNA (adenine-N6)-methyltransferase activity"/>
    <property type="evidence" value="ECO:0007669"/>
    <property type="project" value="UniProtKB-UniRule"/>
</dbReference>
<dbReference type="GO" id="GO:0008033">
    <property type="term" value="P:tRNA processing"/>
    <property type="evidence" value="ECO:0007669"/>
    <property type="project" value="UniProtKB-UniRule"/>
</dbReference>
<dbReference type="CDD" id="cd02440">
    <property type="entry name" value="AdoMet_MTases"/>
    <property type="match status" value="1"/>
</dbReference>
<dbReference type="Gene3D" id="3.40.50.150">
    <property type="entry name" value="Vaccinia Virus protein VP39"/>
    <property type="match status" value="1"/>
</dbReference>
<dbReference type="HAMAP" id="MF_01872">
    <property type="entry name" value="tRNA_methyltr_YfiC"/>
    <property type="match status" value="1"/>
</dbReference>
<dbReference type="InterPro" id="IPR002052">
    <property type="entry name" value="DNA_methylase_N6_adenine_CS"/>
</dbReference>
<dbReference type="InterPro" id="IPR020596">
    <property type="entry name" value="rRNA_Ade_Mease_Trfase_CS"/>
</dbReference>
<dbReference type="InterPro" id="IPR029063">
    <property type="entry name" value="SAM-dependent_MTases_sf"/>
</dbReference>
<dbReference type="InterPro" id="IPR007848">
    <property type="entry name" value="Small_mtfrase_dom"/>
</dbReference>
<dbReference type="InterPro" id="IPR050210">
    <property type="entry name" value="tRNA_Adenine-N(6)_MTase"/>
</dbReference>
<dbReference type="InterPro" id="IPR022882">
    <property type="entry name" value="tRNA_adenine-N6_MeTrfase"/>
</dbReference>
<dbReference type="PANTHER" id="PTHR47739">
    <property type="entry name" value="TRNA1(VAL) (ADENINE(37)-N6)-METHYLTRANSFERASE"/>
    <property type="match status" value="1"/>
</dbReference>
<dbReference type="PANTHER" id="PTHR47739:SF1">
    <property type="entry name" value="TRNA1(VAL) (ADENINE(37)-N6)-METHYLTRANSFERASE"/>
    <property type="match status" value="1"/>
</dbReference>
<dbReference type="Pfam" id="PF05175">
    <property type="entry name" value="MTS"/>
    <property type="match status" value="1"/>
</dbReference>
<dbReference type="PRINTS" id="PR00507">
    <property type="entry name" value="N12N6MTFRASE"/>
</dbReference>
<dbReference type="SUPFAM" id="SSF53335">
    <property type="entry name" value="S-adenosyl-L-methionine-dependent methyltransferases"/>
    <property type="match status" value="1"/>
</dbReference>
<dbReference type="PROSITE" id="PS00092">
    <property type="entry name" value="N6_MTASE"/>
    <property type="match status" value="1"/>
</dbReference>
<feature type="chain" id="PRO_0000387432" description="tRNA1(Val) (adenine(37)-N6)-methyltransferase">
    <location>
        <begin position="1"/>
        <end position="243"/>
    </location>
</feature>
<proteinExistence type="inferred from homology"/>
<organism>
    <name type="scientific">Shewanella woodyi (strain ATCC 51908 / MS32)</name>
    <dbReference type="NCBI Taxonomy" id="392500"/>
    <lineage>
        <taxon>Bacteria</taxon>
        <taxon>Pseudomonadati</taxon>
        <taxon>Pseudomonadota</taxon>
        <taxon>Gammaproteobacteria</taxon>
        <taxon>Alteromonadales</taxon>
        <taxon>Shewanellaceae</taxon>
        <taxon>Shewanella</taxon>
    </lineage>
</organism>
<protein>
    <recommendedName>
        <fullName evidence="1">tRNA1(Val) (adenine(37)-N6)-methyltransferase</fullName>
        <ecNumber evidence="1">2.1.1.223</ecNumber>
    </recommendedName>
    <alternativeName>
        <fullName evidence="1">tRNA m6A37 methyltransferase</fullName>
    </alternativeName>
</protein>